<feature type="chain" id="PRO_1000008631" description="4-hydroxy-tetrahydrodipicolinate reductase">
    <location>
        <begin position="1"/>
        <end position="270"/>
    </location>
</feature>
<feature type="active site" description="Proton donor/acceptor" evidence="1">
    <location>
        <position position="158"/>
    </location>
</feature>
<feature type="active site" description="Proton donor" evidence="1">
    <location>
        <position position="162"/>
    </location>
</feature>
<feature type="binding site" evidence="1">
    <location>
        <begin position="11"/>
        <end position="16"/>
    </location>
    <ligand>
        <name>NAD(+)</name>
        <dbReference type="ChEBI" id="CHEBI:57540"/>
    </ligand>
</feature>
<feature type="binding site" evidence="1">
    <location>
        <position position="37"/>
    </location>
    <ligand>
        <name>NAD(+)</name>
        <dbReference type="ChEBI" id="CHEBI:57540"/>
    </ligand>
</feature>
<feature type="binding site" evidence="1">
    <location>
        <position position="38"/>
    </location>
    <ligand>
        <name>NADP(+)</name>
        <dbReference type="ChEBI" id="CHEBI:58349"/>
    </ligand>
</feature>
<feature type="binding site" evidence="1">
    <location>
        <begin position="101"/>
        <end position="103"/>
    </location>
    <ligand>
        <name>NAD(+)</name>
        <dbReference type="ChEBI" id="CHEBI:57540"/>
    </ligand>
</feature>
<feature type="binding site" evidence="1">
    <location>
        <begin position="125"/>
        <end position="128"/>
    </location>
    <ligand>
        <name>NAD(+)</name>
        <dbReference type="ChEBI" id="CHEBI:57540"/>
    </ligand>
</feature>
<feature type="binding site" evidence="1">
    <location>
        <position position="159"/>
    </location>
    <ligand>
        <name>(S)-2,3,4,5-tetrahydrodipicolinate</name>
        <dbReference type="ChEBI" id="CHEBI:16845"/>
    </ligand>
</feature>
<feature type="binding site" evidence="1">
    <location>
        <begin position="168"/>
        <end position="169"/>
    </location>
    <ligand>
        <name>(S)-2,3,4,5-tetrahydrodipicolinate</name>
        <dbReference type="ChEBI" id="CHEBI:16845"/>
    </ligand>
</feature>
<comment type="function">
    <text evidence="1">Catalyzes the conversion of 4-hydroxy-tetrahydrodipicolinate (HTPA) to tetrahydrodipicolinate.</text>
</comment>
<comment type="catalytic activity">
    <reaction evidence="1">
        <text>(S)-2,3,4,5-tetrahydrodipicolinate + NAD(+) + H2O = (2S,4S)-4-hydroxy-2,3,4,5-tetrahydrodipicolinate + NADH + H(+)</text>
        <dbReference type="Rhea" id="RHEA:35323"/>
        <dbReference type="ChEBI" id="CHEBI:15377"/>
        <dbReference type="ChEBI" id="CHEBI:15378"/>
        <dbReference type="ChEBI" id="CHEBI:16845"/>
        <dbReference type="ChEBI" id="CHEBI:57540"/>
        <dbReference type="ChEBI" id="CHEBI:57945"/>
        <dbReference type="ChEBI" id="CHEBI:67139"/>
        <dbReference type="EC" id="1.17.1.8"/>
    </reaction>
</comment>
<comment type="catalytic activity">
    <reaction evidence="1">
        <text>(S)-2,3,4,5-tetrahydrodipicolinate + NADP(+) + H2O = (2S,4S)-4-hydroxy-2,3,4,5-tetrahydrodipicolinate + NADPH + H(+)</text>
        <dbReference type="Rhea" id="RHEA:35331"/>
        <dbReference type="ChEBI" id="CHEBI:15377"/>
        <dbReference type="ChEBI" id="CHEBI:15378"/>
        <dbReference type="ChEBI" id="CHEBI:16845"/>
        <dbReference type="ChEBI" id="CHEBI:57783"/>
        <dbReference type="ChEBI" id="CHEBI:58349"/>
        <dbReference type="ChEBI" id="CHEBI:67139"/>
        <dbReference type="EC" id="1.17.1.8"/>
    </reaction>
</comment>
<comment type="pathway">
    <text evidence="1">Amino-acid biosynthesis; L-lysine biosynthesis via DAP pathway; (S)-tetrahydrodipicolinate from L-aspartate: step 4/4.</text>
</comment>
<comment type="subcellular location">
    <subcellularLocation>
        <location evidence="1">Cytoplasm</location>
    </subcellularLocation>
</comment>
<comment type="similarity">
    <text evidence="1">Belongs to the DapB family.</text>
</comment>
<comment type="caution">
    <text evidence="2">Was originally thought to be a dihydrodipicolinate reductase (DHDPR), catalyzing the conversion of dihydrodipicolinate to tetrahydrodipicolinate. However, it was shown in E.coli that the substrate of the enzymatic reaction is not dihydrodipicolinate (DHDP) but in fact (2S,4S)-4-hydroxy-2,3,4,5-tetrahydrodipicolinic acid (HTPA), the product released by the DapA-catalyzed reaction.</text>
</comment>
<organism>
    <name type="scientific">Shewanella amazonensis (strain ATCC BAA-1098 / SB2B)</name>
    <dbReference type="NCBI Taxonomy" id="326297"/>
    <lineage>
        <taxon>Bacteria</taxon>
        <taxon>Pseudomonadati</taxon>
        <taxon>Pseudomonadota</taxon>
        <taxon>Gammaproteobacteria</taxon>
        <taxon>Alteromonadales</taxon>
        <taxon>Shewanellaceae</taxon>
        <taxon>Shewanella</taxon>
    </lineage>
</organism>
<reference key="1">
    <citation type="submission" date="2006-12" db="EMBL/GenBank/DDBJ databases">
        <title>Complete sequence of Shewanella amazonensis SB2B.</title>
        <authorList>
            <consortium name="US DOE Joint Genome Institute"/>
            <person name="Copeland A."/>
            <person name="Lucas S."/>
            <person name="Lapidus A."/>
            <person name="Barry K."/>
            <person name="Detter J.C."/>
            <person name="Glavina del Rio T."/>
            <person name="Hammon N."/>
            <person name="Israni S."/>
            <person name="Dalin E."/>
            <person name="Tice H."/>
            <person name="Pitluck S."/>
            <person name="Munk A.C."/>
            <person name="Brettin T."/>
            <person name="Bruce D."/>
            <person name="Han C."/>
            <person name="Tapia R."/>
            <person name="Gilna P."/>
            <person name="Schmutz J."/>
            <person name="Larimer F."/>
            <person name="Land M."/>
            <person name="Hauser L."/>
            <person name="Kyrpides N."/>
            <person name="Mikhailova N."/>
            <person name="Fredrickson J."/>
            <person name="Richardson P."/>
        </authorList>
    </citation>
    <scope>NUCLEOTIDE SEQUENCE [LARGE SCALE GENOMIC DNA]</scope>
    <source>
        <strain>ATCC BAA-1098 / SB2B</strain>
    </source>
</reference>
<evidence type="ECO:0000255" key="1">
    <source>
        <dbReference type="HAMAP-Rule" id="MF_00102"/>
    </source>
</evidence>
<evidence type="ECO:0000305" key="2"/>
<protein>
    <recommendedName>
        <fullName evidence="1">4-hydroxy-tetrahydrodipicolinate reductase</fullName>
        <shortName evidence="1">HTPA reductase</shortName>
        <ecNumber evidence="1">1.17.1.8</ecNumber>
    </recommendedName>
</protein>
<gene>
    <name evidence="1" type="primary">dapB</name>
    <name type="ordered locus">Sama_2505</name>
</gene>
<proteinExistence type="inferred from homology"/>
<dbReference type="EC" id="1.17.1.8" evidence="1"/>
<dbReference type="EMBL" id="CP000507">
    <property type="protein sequence ID" value="ABM00708.1"/>
    <property type="molecule type" value="Genomic_DNA"/>
</dbReference>
<dbReference type="RefSeq" id="WP_011760614.1">
    <property type="nucleotide sequence ID" value="NC_008700.1"/>
</dbReference>
<dbReference type="SMR" id="A1S8K1"/>
<dbReference type="STRING" id="326297.Sama_2505"/>
<dbReference type="KEGG" id="saz:Sama_2505"/>
<dbReference type="eggNOG" id="COG0289">
    <property type="taxonomic scope" value="Bacteria"/>
</dbReference>
<dbReference type="HOGENOM" id="CLU_047479_2_1_6"/>
<dbReference type="OrthoDB" id="9790352at2"/>
<dbReference type="UniPathway" id="UPA00034">
    <property type="reaction ID" value="UER00018"/>
</dbReference>
<dbReference type="Proteomes" id="UP000009175">
    <property type="component" value="Chromosome"/>
</dbReference>
<dbReference type="GO" id="GO:0005829">
    <property type="term" value="C:cytosol"/>
    <property type="evidence" value="ECO:0007669"/>
    <property type="project" value="TreeGrafter"/>
</dbReference>
<dbReference type="GO" id="GO:0008839">
    <property type="term" value="F:4-hydroxy-tetrahydrodipicolinate reductase"/>
    <property type="evidence" value="ECO:0007669"/>
    <property type="project" value="UniProtKB-EC"/>
</dbReference>
<dbReference type="GO" id="GO:0051287">
    <property type="term" value="F:NAD binding"/>
    <property type="evidence" value="ECO:0007669"/>
    <property type="project" value="UniProtKB-UniRule"/>
</dbReference>
<dbReference type="GO" id="GO:0050661">
    <property type="term" value="F:NADP binding"/>
    <property type="evidence" value="ECO:0007669"/>
    <property type="project" value="UniProtKB-UniRule"/>
</dbReference>
<dbReference type="GO" id="GO:0016726">
    <property type="term" value="F:oxidoreductase activity, acting on CH or CH2 groups, NAD or NADP as acceptor"/>
    <property type="evidence" value="ECO:0007669"/>
    <property type="project" value="UniProtKB-UniRule"/>
</dbReference>
<dbReference type="GO" id="GO:0019877">
    <property type="term" value="P:diaminopimelate biosynthetic process"/>
    <property type="evidence" value="ECO:0007669"/>
    <property type="project" value="UniProtKB-UniRule"/>
</dbReference>
<dbReference type="GO" id="GO:0009089">
    <property type="term" value="P:lysine biosynthetic process via diaminopimelate"/>
    <property type="evidence" value="ECO:0007669"/>
    <property type="project" value="UniProtKB-UniRule"/>
</dbReference>
<dbReference type="CDD" id="cd02274">
    <property type="entry name" value="DHDPR_N"/>
    <property type="match status" value="1"/>
</dbReference>
<dbReference type="FunFam" id="3.30.360.10:FF:000004">
    <property type="entry name" value="4-hydroxy-tetrahydrodipicolinate reductase"/>
    <property type="match status" value="1"/>
</dbReference>
<dbReference type="FunFam" id="3.40.50.720:FF:000048">
    <property type="entry name" value="4-hydroxy-tetrahydrodipicolinate reductase"/>
    <property type="match status" value="1"/>
</dbReference>
<dbReference type="Gene3D" id="3.30.360.10">
    <property type="entry name" value="Dihydrodipicolinate Reductase, domain 2"/>
    <property type="match status" value="1"/>
</dbReference>
<dbReference type="Gene3D" id="3.40.50.720">
    <property type="entry name" value="NAD(P)-binding Rossmann-like Domain"/>
    <property type="match status" value="1"/>
</dbReference>
<dbReference type="HAMAP" id="MF_00102">
    <property type="entry name" value="DapB"/>
    <property type="match status" value="1"/>
</dbReference>
<dbReference type="InterPro" id="IPR022663">
    <property type="entry name" value="DapB_C"/>
</dbReference>
<dbReference type="InterPro" id="IPR000846">
    <property type="entry name" value="DapB_N"/>
</dbReference>
<dbReference type="InterPro" id="IPR022664">
    <property type="entry name" value="DapB_N_CS"/>
</dbReference>
<dbReference type="InterPro" id="IPR023940">
    <property type="entry name" value="DHDPR_bac"/>
</dbReference>
<dbReference type="InterPro" id="IPR036291">
    <property type="entry name" value="NAD(P)-bd_dom_sf"/>
</dbReference>
<dbReference type="NCBIfam" id="TIGR00036">
    <property type="entry name" value="dapB"/>
    <property type="match status" value="1"/>
</dbReference>
<dbReference type="PANTHER" id="PTHR20836:SF0">
    <property type="entry name" value="4-HYDROXY-TETRAHYDRODIPICOLINATE REDUCTASE 1, CHLOROPLASTIC-RELATED"/>
    <property type="match status" value="1"/>
</dbReference>
<dbReference type="PANTHER" id="PTHR20836">
    <property type="entry name" value="DIHYDRODIPICOLINATE REDUCTASE"/>
    <property type="match status" value="1"/>
</dbReference>
<dbReference type="Pfam" id="PF05173">
    <property type="entry name" value="DapB_C"/>
    <property type="match status" value="1"/>
</dbReference>
<dbReference type="Pfam" id="PF01113">
    <property type="entry name" value="DapB_N"/>
    <property type="match status" value="1"/>
</dbReference>
<dbReference type="PIRSF" id="PIRSF000161">
    <property type="entry name" value="DHPR"/>
    <property type="match status" value="1"/>
</dbReference>
<dbReference type="SUPFAM" id="SSF55347">
    <property type="entry name" value="Glyceraldehyde-3-phosphate dehydrogenase-like, C-terminal domain"/>
    <property type="match status" value="1"/>
</dbReference>
<dbReference type="SUPFAM" id="SSF51735">
    <property type="entry name" value="NAD(P)-binding Rossmann-fold domains"/>
    <property type="match status" value="1"/>
</dbReference>
<dbReference type="PROSITE" id="PS01298">
    <property type="entry name" value="DAPB"/>
    <property type="match status" value="1"/>
</dbReference>
<sequence>MTGQVRVAVIGASGRMGRALLEACDNHDGIVLGAAIERAGSTLVGVDAGEMAGIGHLGLALVDNLDAVADKFDVLIDFTSPEGTLANLEWCARQGKAIVIGTTGFNHAQKEQVVAFAEETPVVMAPNMSVGVNLMWKLLELAAKVMGDYTDIEIIEGHHRHKKDAPSGTALKMGEVIAQALGRDLEKVAVYGREGITGERDRETIGFATIRAGDLVGEHTAMFADIGERLEITHKASSRMTFANGAMRAAKWLAEQKPGLYDMQQVLGLN</sequence>
<keyword id="KW-0028">Amino-acid biosynthesis</keyword>
<keyword id="KW-0963">Cytoplasm</keyword>
<keyword id="KW-0220">Diaminopimelate biosynthesis</keyword>
<keyword id="KW-0457">Lysine biosynthesis</keyword>
<keyword id="KW-0520">NAD</keyword>
<keyword id="KW-0521">NADP</keyword>
<keyword id="KW-0560">Oxidoreductase</keyword>
<keyword id="KW-1185">Reference proteome</keyword>
<name>DAPB_SHEAM</name>
<accession>A1S8K1</accession>